<protein>
    <recommendedName>
        <fullName evidence="1">ATP synthase subunit c</fullName>
    </recommendedName>
    <alternativeName>
        <fullName evidence="1">ATP synthase F(0) sector subunit c</fullName>
    </alternativeName>
    <alternativeName>
        <fullName evidence="1">F-type ATPase subunit c</fullName>
        <shortName evidence="1">F-ATPase subunit c</shortName>
    </alternativeName>
    <alternativeName>
        <fullName evidence="1">Lipid-binding protein</fullName>
    </alternativeName>
</protein>
<comment type="function">
    <text evidence="1">F(1)F(0) ATP synthase produces ATP from ADP in the presence of a proton or sodium gradient. F-type ATPases consist of two structural domains, F(1) containing the extramembraneous catalytic core and F(0) containing the membrane proton channel, linked together by a central stalk and a peripheral stalk. During catalysis, ATP synthesis in the catalytic domain of F(1) is coupled via a rotary mechanism of the central stalk subunits to proton translocation.</text>
</comment>
<comment type="function">
    <text evidence="1">Key component of the F(0) channel; it plays a direct role in translocation across the membrane. A homomeric c-ring of between 10-14 subunits forms the central stalk rotor element with the F(1) delta and epsilon subunits.</text>
</comment>
<comment type="subunit">
    <text evidence="1">F-type ATPases have 2 components, F(1) - the catalytic core - and F(0) - the membrane proton channel. F(1) has five subunits: alpha(3), beta(3), gamma(1), delta(1), epsilon(1). F(0) has three main subunits: a(1), b(2) and c(10-14). The alpha and beta chains form an alternating ring which encloses part of the gamma chain. F(1) is attached to F(0) by a central stalk formed by the gamma and epsilon chains, while a peripheral stalk is formed by the delta and b chains.</text>
</comment>
<comment type="subcellular location">
    <subcellularLocation>
        <location evidence="1">Cell inner membrane</location>
        <topology evidence="1">Multi-pass membrane protein</topology>
    </subcellularLocation>
</comment>
<comment type="similarity">
    <text evidence="1">Belongs to the ATPase C chain family.</text>
</comment>
<name>ATPL_PARUW</name>
<proteinExistence type="inferred from homology"/>
<gene>
    <name evidence="1" type="primary">atpE</name>
    <name type="ordered locus">pc1673</name>
</gene>
<sequence>MHLARNPALKSIYIKIRKRKTMSIGTALALSAPFAVGLAALGSGLGLGRAVSSAMEAIGRQPEASGKILTTMIIGAALIEALTIYALIVFFVVLEKMA</sequence>
<reference key="1">
    <citation type="journal article" date="2004" name="Science">
        <title>Illuminating the evolutionary history of chlamydiae.</title>
        <authorList>
            <person name="Horn M."/>
            <person name="Collingro A."/>
            <person name="Schmitz-Esser S."/>
            <person name="Beier C.L."/>
            <person name="Purkhold U."/>
            <person name="Fartmann B."/>
            <person name="Brandt P."/>
            <person name="Nyakatura G.J."/>
            <person name="Droege M."/>
            <person name="Frishman D."/>
            <person name="Rattei T."/>
            <person name="Mewes H.-W."/>
            <person name="Wagner M."/>
        </authorList>
    </citation>
    <scope>NUCLEOTIDE SEQUENCE [LARGE SCALE GENOMIC DNA]</scope>
    <source>
        <strain>UWE25</strain>
    </source>
</reference>
<dbReference type="EMBL" id="BX908798">
    <property type="protein sequence ID" value="CAF24397.1"/>
    <property type="molecule type" value="Genomic_DNA"/>
</dbReference>
<dbReference type="SMR" id="Q6MAK2"/>
<dbReference type="STRING" id="264201.pc1673"/>
<dbReference type="eggNOG" id="COG0636">
    <property type="taxonomic scope" value="Bacteria"/>
</dbReference>
<dbReference type="HOGENOM" id="CLU_148047_5_2_0"/>
<dbReference type="Proteomes" id="UP000000529">
    <property type="component" value="Chromosome"/>
</dbReference>
<dbReference type="GO" id="GO:0005886">
    <property type="term" value="C:plasma membrane"/>
    <property type="evidence" value="ECO:0007669"/>
    <property type="project" value="UniProtKB-SubCell"/>
</dbReference>
<dbReference type="GO" id="GO:0045259">
    <property type="term" value="C:proton-transporting ATP synthase complex"/>
    <property type="evidence" value="ECO:0007669"/>
    <property type="project" value="UniProtKB-KW"/>
</dbReference>
<dbReference type="GO" id="GO:0033177">
    <property type="term" value="C:proton-transporting two-sector ATPase complex, proton-transporting domain"/>
    <property type="evidence" value="ECO:0007669"/>
    <property type="project" value="InterPro"/>
</dbReference>
<dbReference type="GO" id="GO:0008289">
    <property type="term" value="F:lipid binding"/>
    <property type="evidence" value="ECO:0007669"/>
    <property type="project" value="UniProtKB-KW"/>
</dbReference>
<dbReference type="GO" id="GO:0046933">
    <property type="term" value="F:proton-transporting ATP synthase activity, rotational mechanism"/>
    <property type="evidence" value="ECO:0007669"/>
    <property type="project" value="UniProtKB-UniRule"/>
</dbReference>
<dbReference type="CDD" id="cd18121">
    <property type="entry name" value="ATP-synt_Fo_c"/>
    <property type="match status" value="1"/>
</dbReference>
<dbReference type="FunFam" id="1.20.20.10:FF:000004">
    <property type="entry name" value="ATP synthase subunit c"/>
    <property type="match status" value="1"/>
</dbReference>
<dbReference type="Gene3D" id="1.20.20.10">
    <property type="entry name" value="F1F0 ATP synthase subunit C"/>
    <property type="match status" value="1"/>
</dbReference>
<dbReference type="HAMAP" id="MF_01396">
    <property type="entry name" value="ATP_synth_c_bact"/>
    <property type="match status" value="1"/>
</dbReference>
<dbReference type="InterPro" id="IPR005953">
    <property type="entry name" value="ATP_synth_csu_bac/chlpt"/>
</dbReference>
<dbReference type="InterPro" id="IPR000454">
    <property type="entry name" value="ATP_synth_F0_csu"/>
</dbReference>
<dbReference type="InterPro" id="IPR020537">
    <property type="entry name" value="ATP_synth_F0_csu_DDCD_BS"/>
</dbReference>
<dbReference type="InterPro" id="IPR038662">
    <property type="entry name" value="ATP_synth_F0_csu_sf"/>
</dbReference>
<dbReference type="InterPro" id="IPR002379">
    <property type="entry name" value="ATPase_proteolipid_c-like_dom"/>
</dbReference>
<dbReference type="InterPro" id="IPR035921">
    <property type="entry name" value="F/V-ATP_Csub_sf"/>
</dbReference>
<dbReference type="NCBIfam" id="TIGR01260">
    <property type="entry name" value="ATP_synt_c"/>
    <property type="match status" value="1"/>
</dbReference>
<dbReference type="Pfam" id="PF00137">
    <property type="entry name" value="ATP-synt_C"/>
    <property type="match status" value="1"/>
</dbReference>
<dbReference type="PRINTS" id="PR00124">
    <property type="entry name" value="ATPASEC"/>
</dbReference>
<dbReference type="SUPFAM" id="SSF81333">
    <property type="entry name" value="F1F0 ATP synthase subunit C"/>
    <property type="match status" value="1"/>
</dbReference>
<dbReference type="PROSITE" id="PS00605">
    <property type="entry name" value="ATPASE_C"/>
    <property type="match status" value="1"/>
</dbReference>
<organism>
    <name type="scientific">Protochlamydia amoebophila (strain UWE25)</name>
    <dbReference type="NCBI Taxonomy" id="264201"/>
    <lineage>
        <taxon>Bacteria</taxon>
        <taxon>Pseudomonadati</taxon>
        <taxon>Chlamydiota</taxon>
        <taxon>Chlamydiia</taxon>
        <taxon>Parachlamydiales</taxon>
        <taxon>Parachlamydiaceae</taxon>
        <taxon>Candidatus Protochlamydia</taxon>
    </lineage>
</organism>
<evidence type="ECO:0000255" key="1">
    <source>
        <dbReference type="HAMAP-Rule" id="MF_01396"/>
    </source>
</evidence>
<keyword id="KW-0066">ATP synthesis</keyword>
<keyword id="KW-0997">Cell inner membrane</keyword>
<keyword id="KW-1003">Cell membrane</keyword>
<keyword id="KW-0138">CF(0)</keyword>
<keyword id="KW-0375">Hydrogen ion transport</keyword>
<keyword id="KW-0406">Ion transport</keyword>
<keyword id="KW-0446">Lipid-binding</keyword>
<keyword id="KW-0472">Membrane</keyword>
<keyword id="KW-1185">Reference proteome</keyword>
<keyword id="KW-0812">Transmembrane</keyword>
<keyword id="KW-1133">Transmembrane helix</keyword>
<keyword id="KW-0813">Transport</keyword>
<accession>Q6MAK2</accession>
<feature type="chain" id="PRO_0000365919" description="ATP synthase subunit c">
    <location>
        <begin position="1"/>
        <end position="98"/>
    </location>
</feature>
<feature type="transmembrane region" description="Helical" evidence="1">
    <location>
        <begin position="27"/>
        <end position="47"/>
    </location>
</feature>
<feature type="transmembrane region" description="Helical" evidence="1">
    <location>
        <begin position="73"/>
        <end position="93"/>
    </location>
</feature>
<feature type="site" description="Reversibly protonated during proton transport" evidence="1">
    <location>
        <position position="80"/>
    </location>
</feature>